<feature type="signal peptide" evidence="2">
    <location>
        <begin position="1"/>
        <end position="31"/>
    </location>
</feature>
<feature type="chain" id="PRO_0000285964" description="PILR alpha-associated neural protein">
    <location>
        <begin position="32"/>
        <end position="282"/>
    </location>
</feature>
<feature type="topological domain" description="Extracellular" evidence="2">
    <location>
        <begin position="32"/>
        <end position="178"/>
    </location>
</feature>
<feature type="transmembrane region" description="Helical" evidence="2">
    <location>
        <begin position="179"/>
        <end position="199"/>
    </location>
</feature>
<feature type="topological domain" description="Cytoplasmic" evidence="2">
    <location>
        <begin position="200"/>
        <end position="282"/>
    </location>
</feature>
<feature type="region of interest" description="Disordered" evidence="3">
    <location>
        <begin position="28"/>
        <end position="99"/>
    </location>
</feature>
<feature type="region of interest" description="Disordered" evidence="3">
    <location>
        <begin position="209"/>
        <end position="282"/>
    </location>
</feature>
<feature type="compositionally biased region" description="Low complexity" evidence="3">
    <location>
        <begin position="46"/>
        <end position="56"/>
    </location>
</feature>
<feature type="compositionally biased region" description="Polar residues" evidence="3">
    <location>
        <begin position="213"/>
        <end position="229"/>
    </location>
</feature>
<feature type="glycosylation site" description="O-linked (GalNAc...) threonine" evidence="1">
    <location>
        <position position="140"/>
    </location>
</feature>
<feature type="splice variant" id="VSP_024939" description="In isoform 2." evidence="5 6">
    <location>
        <begin position="277"/>
        <end position="282"/>
    </location>
</feature>
<feature type="sequence conflict" description="In Ref. 3; BAG52398." evidence="7" ref="3">
    <original>L</original>
    <variation>S</variation>
    <location>
        <position position="22"/>
    </location>
</feature>
<feature type="sequence conflict" description="In Ref. 3; BAG51669." evidence="7" ref="3">
    <original>APA</original>
    <variation>VPT</variation>
    <location>
        <begin position="41"/>
        <end position="43"/>
    </location>
</feature>
<gene>
    <name type="primary">PIANP</name>
    <name type="synonym">C12orf53</name>
    <name type="synonym">PANP</name>
    <name type="ORF">UNQ828/PRO1755</name>
</gene>
<sequence length="282" mass="30076">MESRMWPALLLSHLLPLWPLLLLPLPPPAQGSSSSPRTPPAPARPPCARGGPSAPRHVCVWERAPPPSRSPRVPRSRRQVLPGTAPPATPSGFEEGPPSSQYPWAIVWGPTVSREDGGDPNSANPGFLDYGFAAPHGLATPHPNSDSMRGDGDGLILGEAPATLRPFLFGGRGEGVDPQLYVTITISIIIVLVATGIIFKFCWDRSQKRRRPSGQQGALRQEESQQPLTDLSPAGVTVLGAFGDSPTPTPDHEEPRGGPRPGMPHPKGAPAFQLNRIPLVNL</sequence>
<evidence type="ECO:0000250" key="1"/>
<evidence type="ECO:0000255" key="2"/>
<evidence type="ECO:0000256" key="3">
    <source>
        <dbReference type="SAM" id="MobiDB-lite"/>
    </source>
</evidence>
<evidence type="ECO:0000269" key="4">
    <source>
    </source>
</evidence>
<evidence type="ECO:0000303" key="5">
    <source>
    </source>
</evidence>
<evidence type="ECO:0000303" key="6">
    <source>
    </source>
</evidence>
<evidence type="ECO:0000305" key="7"/>
<name>PIANP_HUMAN</name>
<dbReference type="EMBL" id="AY358534">
    <property type="protein sequence ID" value="AAQ88898.1"/>
    <property type="molecule type" value="mRNA"/>
</dbReference>
<dbReference type="EMBL" id="AK056295">
    <property type="protein sequence ID" value="BAG51669.1"/>
    <property type="molecule type" value="mRNA"/>
</dbReference>
<dbReference type="EMBL" id="AK091656">
    <property type="protein sequence ID" value="BAG52398.1"/>
    <property type="molecule type" value="mRNA"/>
</dbReference>
<dbReference type="EMBL" id="AK095854">
    <property type="protein sequence ID" value="BAG53145.1"/>
    <property type="molecule type" value="mRNA"/>
</dbReference>
<dbReference type="EMBL" id="AK289648">
    <property type="protein sequence ID" value="BAF82337.1"/>
    <property type="molecule type" value="mRNA"/>
</dbReference>
<dbReference type="EMBL" id="CH471116">
    <property type="protein sequence ID" value="EAW88750.1"/>
    <property type="molecule type" value="Genomic_DNA"/>
</dbReference>
<dbReference type="EMBL" id="CH471116">
    <property type="protein sequence ID" value="EAW88751.1"/>
    <property type="molecule type" value="Genomic_DNA"/>
</dbReference>
<dbReference type="EMBL" id="BC035736">
    <property type="protein sequence ID" value="AAH35736.1"/>
    <property type="molecule type" value="mRNA"/>
</dbReference>
<dbReference type="CCDS" id="CCDS44818.1">
    <molecule id="Q8IYJ0-1"/>
</dbReference>
<dbReference type="CCDS" id="CCDS58205.1">
    <molecule id="Q8IYJ0-2"/>
</dbReference>
<dbReference type="RefSeq" id="NP_001230943.1">
    <molecule id="Q8IYJ0-2"/>
    <property type="nucleotide sequence ID" value="NM_001244014.2"/>
</dbReference>
<dbReference type="RefSeq" id="NP_001230944.1">
    <molecule id="Q8IYJ0-1"/>
    <property type="nucleotide sequence ID" value="NM_001244015.2"/>
</dbReference>
<dbReference type="RefSeq" id="NP_710152.1">
    <molecule id="Q8IYJ0-1"/>
    <property type="nucleotide sequence ID" value="NM_153685.4"/>
</dbReference>
<dbReference type="BioGRID" id="128215">
    <property type="interactions" value="17"/>
</dbReference>
<dbReference type="FunCoup" id="Q8IYJ0">
    <property type="interactions" value="273"/>
</dbReference>
<dbReference type="IntAct" id="Q8IYJ0">
    <property type="interactions" value="16"/>
</dbReference>
<dbReference type="STRING" id="9606.ENSP00000442157"/>
<dbReference type="GlyCosmos" id="Q8IYJ0">
    <property type="glycosylation" value="1 site, No reported glycans"/>
</dbReference>
<dbReference type="GlyGen" id="Q8IYJ0">
    <property type="glycosylation" value="5 sites"/>
</dbReference>
<dbReference type="PhosphoSitePlus" id="Q8IYJ0"/>
<dbReference type="BioMuta" id="PIANP"/>
<dbReference type="DMDM" id="74728342"/>
<dbReference type="jPOST" id="Q8IYJ0"/>
<dbReference type="MassIVE" id="Q8IYJ0"/>
<dbReference type="PaxDb" id="9606-ENSP00000442157"/>
<dbReference type="PeptideAtlas" id="Q8IYJ0"/>
<dbReference type="ProteomicsDB" id="71182">
    <molecule id="Q8IYJ0-1"/>
</dbReference>
<dbReference type="ProteomicsDB" id="71183">
    <molecule id="Q8IYJ0-2"/>
</dbReference>
<dbReference type="Antibodypedia" id="22637">
    <property type="antibodies" value="102 antibodies from 16 providers"/>
</dbReference>
<dbReference type="DNASU" id="196500"/>
<dbReference type="Ensembl" id="ENST00000320591.9">
    <molecule id="Q8IYJ0-1"/>
    <property type="protein sequence ID" value="ENSP00000317818.5"/>
    <property type="gene ID" value="ENSG00000139200.14"/>
</dbReference>
<dbReference type="Ensembl" id="ENST00000534837.6">
    <molecule id="Q8IYJ0-2"/>
    <property type="protein sequence ID" value="ENSP00000443919.1"/>
    <property type="gene ID" value="ENSG00000139200.14"/>
</dbReference>
<dbReference type="Ensembl" id="ENST00000540656.5">
    <molecule id="Q8IYJ0-1"/>
    <property type="protein sequence ID" value="ENSP00000442157.1"/>
    <property type="gene ID" value="ENSG00000139200.14"/>
</dbReference>
<dbReference type="GeneID" id="196500"/>
<dbReference type="KEGG" id="hsa:196500"/>
<dbReference type="MANE-Select" id="ENST00000534837.6">
    <molecule id="Q8IYJ0-2"/>
    <property type="protein sequence ID" value="ENSP00000443919.1"/>
    <property type="RefSeq nucleotide sequence ID" value="NM_001244014.2"/>
    <property type="RefSeq protein sequence ID" value="NP_001230943.1"/>
</dbReference>
<dbReference type="UCSC" id="uc001qqf.3">
    <molecule id="Q8IYJ0-1"/>
    <property type="organism name" value="human"/>
</dbReference>
<dbReference type="AGR" id="HGNC:25338"/>
<dbReference type="CTD" id="196500"/>
<dbReference type="DisGeNET" id="196500"/>
<dbReference type="GeneCards" id="PIANP"/>
<dbReference type="HGNC" id="HGNC:25338">
    <property type="gene designation" value="PIANP"/>
</dbReference>
<dbReference type="HPA" id="ENSG00000139200">
    <property type="expression patterns" value="Tissue enriched (brain)"/>
</dbReference>
<dbReference type="MIM" id="616065">
    <property type="type" value="gene"/>
</dbReference>
<dbReference type="neXtProt" id="NX_Q8IYJ0"/>
<dbReference type="OpenTargets" id="ENSG00000139200"/>
<dbReference type="PharmGKB" id="PA143485382"/>
<dbReference type="VEuPathDB" id="HostDB:ENSG00000139200"/>
<dbReference type="eggNOG" id="ENOG502RH1H">
    <property type="taxonomic scope" value="Eukaryota"/>
</dbReference>
<dbReference type="GeneTree" id="ENSGT00510000049460"/>
<dbReference type="HOGENOM" id="CLU_089346_0_0_1"/>
<dbReference type="InParanoid" id="Q8IYJ0"/>
<dbReference type="OMA" id="MEPSACR"/>
<dbReference type="OrthoDB" id="9934112at2759"/>
<dbReference type="PAN-GO" id="Q8IYJ0">
    <property type="GO annotations" value="1 GO annotation based on evolutionary models"/>
</dbReference>
<dbReference type="PhylomeDB" id="Q8IYJ0"/>
<dbReference type="TreeFam" id="TF336539"/>
<dbReference type="PathwayCommons" id="Q8IYJ0"/>
<dbReference type="Reactome" id="R-HSA-198933">
    <property type="pathway name" value="Immunoregulatory interactions between a Lymphoid and a non-Lymphoid cell"/>
</dbReference>
<dbReference type="SignaLink" id="Q8IYJ0"/>
<dbReference type="BioGRID-ORCS" id="196500">
    <property type="hits" value="14 hits in 1144 CRISPR screens"/>
</dbReference>
<dbReference type="GenomeRNAi" id="196500"/>
<dbReference type="Pharos" id="Q8IYJ0">
    <property type="development level" value="Tbio"/>
</dbReference>
<dbReference type="PRO" id="PR:Q8IYJ0"/>
<dbReference type="Proteomes" id="UP000005640">
    <property type="component" value="Chromosome 12"/>
</dbReference>
<dbReference type="RNAct" id="Q8IYJ0">
    <property type="molecule type" value="protein"/>
</dbReference>
<dbReference type="Bgee" id="ENSG00000139200">
    <property type="expression patterns" value="Expressed in cingulate cortex and 121 other cell types or tissues"/>
</dbReference>
<dbReference type="ExpressionAtlas" id="Q8IYJ0">
    <property type="expression patterns" value="baseline and differential"/>
</dbReference>
<dbReference type="GO" id="GO:0016323">
    <property type="term" value="C:basolateral plasma membrane"/>
    <property type="evidence" value="ECO:0000250"/>
    <property type="project" value="UniProtKB"/>
</dbReference>
<dbReference type="GO" id="GO:0016020">
    <property type="term" value="C:membrane"/>
    <property type="evidence" value="ECO:0000318"/>
    <property type="project" value="GO_Central"/>
</dbReference>
<dbReference type="GO" id="GO:0005886">
    <property type="term" value="C:plasma membrane"/>
    <property type="evidence" value="ECO:0000304"/>
    <property type="project" value="Reactome"/>
</dbReference>
<dbReference type="GO" id="GO:0098793">
    <property type="term" value="C:presynapse"/>
    <property type="evidence" value="ECO:0007669"/>
    <property type="project" value="Ensembl"/>
</dbReference>
<dbReference type="GO" id="GO:0019904">
    <property type="term" value="F:protein domain specific binding"/>
    <property type="evidence" value="ECO:0007669"/>
    <property type="project" value="Ensembl"/>
</dbReference>
<dbReference type="GO" id="GO:0021549">
    <property type="term" value="P:cerebellum development"/>
    <property type="evidence" value="ECO:0007669"/>
    <property type="project" value="Ensembl"/>
</dbReference>
<dbReference type="GO" id="GO:0021542">
    <property type="term" value="P:dentate gyrus development"/>
    <property type="evidence" value="ECO:0007669"/>
    <property type="project" value="Ensembl"/>
</dbReference>
<dbReference type="GO" id="GO:0007214">
    <property type="term" value="P:gamma-aminobutyric acid signaling pathway"/>
    <property type="evidence" value="ECO:0007669"/>
    <property type="project" value="Ensembl"/>
</dbReference>
<dbReference type="GO" id="GO:0010467">
    <property type="term" value="P:gene expression"/>
    <property type="evidence" value="ECO:0007669"/>
    <property type="project" value="Ensembl"/>
</dbReference>
<dbReference type="GO" id="GO:0014047">
    <property type="term" value="P:glutamate secretion"/>
    <property type="evidence" value="ECO:0007669"/>
    <property type="project" value="Ensembl"/>
</dbReference>
<dbReference type="GO" id="GO:0048872">
    <property type="term" value="P:homeostasis of number of cells"/>
    <property type="evidence" value="ECO:0007669"/>
    <property type="project" value="Ensembl"/>
</dbReference>
<dbReference type="GO" id="GO:0050776">
    <property type="term" value="P:regulation of immune response"/>
    <property type="evidence" value="ECO:0007669"/>
    <property type="project" value="InterPro"/>
</dbReference>
<dbReference type="GO" id="GO:0006950">
    <property type="term" value="P:response to stress"/>
    <property type="evidence" value="ECO:0007669"/>
    <property type="project" value="Ensembl"/>
</dbReference>
<dbReference type="GO" id="GO:0035176">
    <property type="term" value="P:social behavior"/>
    <property type="evidence" value="ECO:0007669"/>
    <property type="project" value="Ensembl"/>
</dbReference>
<dbReference type="GO" id="GO:0008542">
    <property type="term" value="P:visual learning"/>
    <property type="evidence" value="ECO:0007669"/>
    <property type="project" value="Ensembl"/>
</dbReference>
<dbReference type="InterPro" id="IPR029198">
    <property type="entry name" value="AJAP1_PANP_C"/>
</dbReference>
<dbReference type="InterPro" id="IPR039628">
    <property type="entry name" value="PIANP"/>
</dbReference>
<dbReference type="PANTHER" id="PTHR32023">
    <property type="entry name" value="PILR ALPHA-ASSOCIATED NEURAL PROTEIN"/>
    <property type="match status" value="1"/>
</dbReference>
<dbReference type="PANTHER" id="PTHR32023:SF2">
    <property type="entry name" value="PILR ALPHA-ASSOCIATED NEURAL PROTEIN"/>
    <property type="match status" value="1"/>
</dbReference>
<dbReference type="Pfam" id="PF15298">
    <property type="entry name" value="AJAP1_PANP_C"/>
    <property type="match status" value="1"/>
</dbReference>
<proteinExistence type="evidence at protein level"/>
<keyword id="KW-0025">Alternative splicing</keyword>
<keyword id="KW-0325">Glycoprotein</keyword>
<keyword id="KW-0472">Membrane</keyword>
<keyword id="KW-1267">Proteomics identification</keyword>
<keyword id="KW-1185">Reference proteome</keyword>
<keyword id="KW-0732">Signal</keyword>
<keyword id="KW-0812">Transmembrane</keyword>
<keyword id="KW-1133">Transmembrane helix</keyword>
<reference key="1">
    <citation type="journal article" date="2011" name="Biochem. Biophys. Res. Commun.">
        <title>PANP is a novel O-glycosylated PILRalpha ligand expressed in neural tissues.</title>
        <authorList>
            <person name="Kogure A."/>
            <person name="Shiratori I."/>
            <person name="Wang J."/>
            <person name="Lanier L.L."/>
            <person name="Arase H."/>
        </authorList>
    </citation>
    <scope>NUCLEOTIDE SEQUENCE [MRNA]</scope>
    <scope>FUNCTION</scope>
    <scope>TISSUE SPECIFICITY</scope>
</reference>
<reference key="2">
    <citation type="journal article" date="2003" name="Genome Res.">
        <title>The secreted protein discovery initiative (SPDI), a large-scale effort to identify novel human secreted and transmembrane proteins: a bioinformatics assessment.</title>
        <authorList>
            <person name="Clark H.F."/>
            <person name="Gurney A.L."/>
            <person name="Abaya E."/>
            <person name="Baker K."/>
            <person name="Baldwin D.T."/>
            <person name="Brush J."/>
            <person name="Chen J."/>
            <person name="Chow B."/>
            <person name="Chui C."/>
            <person name="Crowley C."/>
            <person name="Currell B."/>
            <person name="Deuel B."/>
            <person name="Dowd P."/>
            <person name="Eaton D."/>
            <person name="Foster J.S."/>
            <person name="Grimaldi C."/>
            <person name="Gu Q."/>
            <person name="Hass P.E."/>
            <person name="Heldens S."/>
            <person name="Huang A."/>
            <person name="Kim H.S."/>
            <person name="Klimowski L."/>
            <person name="Jin Y."/>
            <person name="Johnson S."/>
            <person name="Lee J."/>
            <person name="Lewis L."/>
            <person name="Liao D."/>
            <person name="Mark M.R."/>
            <person name="Robbie E."/>
            <person name="Sanchez C."/>
            <person name="Schoenfeld J."/>
            <person name="Seshagiri S."/>
            <person name="Simmons L."/>
            <person name="Singh J."/>
            <person name="Smith V."/>
            <person name="Stinson J."/>
            <person name="Vagts A."/>
            <person name="Vandlen R.L."/>
            <person name="Watanabe C."/>
            <person name="Wieand D."/>
            <person name="Woods K."/>
            <person name="Xie M.-H."/>
            <person name="Yansura D.G."/>
            <person name="Yi S."/>
            <person name="Yu G."/>
            <person name="Yuan J."/>
            <person name="Zhang M."/>
            <person name="Zhang Z."/>
            <person name="Goddard A.D."/>
            <person name="Wood W.I."/>
            <person name="Godowski P.J."/>
            <person name="Gray A.M."/>
        </authorList>
    </citation>
    <scope>NUCLEOTIDE SEQUENCE [LARGE SCALE MRNA] (ISOFORM 2)</scope>
</reference>
<reference key="3">
    <citation type="journal article" date="2004" name="Nat. Genet.">
        <title>Complete sequencing and characterization of 21,243 full-length human cDNAs.</title>
        <authorList>
            <person name="Ota T."/>
            <person name="Suzuki Y."/>
            <person name="Nishikawa T."/>
            <person name="Otsuki T."/>
            <person name="Sugiyama T."/>
            <person name="Irie R."/>
            <person name="Wakamatsu A."/>
            <person name="Hayashi K."/>
            <person name="Sato H."/>
            <person name="Nagai K."/>
            <person name="Kimura K."/>
            <person name="Makita H."/>
            <person name="Sekine M."/>
            <person name="Obayashi M."/>
            <person name="Nishi T."/>
            <person name="Shibahara T."/>
            <person name="Tanaka T."/>
            <person name="Ishii S."/>
            <person name="Yamamoto J."/>
            <person name="Saito K."/>
            <person name="Kawai Y."/>
            <person name="Isono Y."/>
            <person name="Nakamura Y."/>
            <person name="Nagahari K."/>
            <person name="Murakami K."/>
            <person name="Yasuda T."/>
            <person name="Iwayanagi T."/>
            <person name="Wagatsuma M."/>
            <person name="Shiratori A."/>
            <person name="Sudo H."/>
            <person name="Hosoiri T."/>
            <person name="Kaku Y."/>
            <person name="Kodaira H."/>
            <person name="Kondo H."/>
            <person name="Sugawara M."/>
            <person name="Takahashi M."/>
            <person name="Kanda K."/>
            <person name="Yokoi T."/>
            <person name="Furuya T."/>
            <person name="Kikkawa E."/>
            <person name="Omura Y."/>
            <person name="Abe K."/>
            <person name="Kamihara K."/>
            <person name="Katsuta N."/>
            <person name="Sato K."/>
            <person name="Tanikawa M."/>
            <person name="Yamazaki M."/>
            <person name="Ninomiya K."/>
            <person name="Ishibashi T."/>
            <person name="Yamashita H."/>
            <person name="Murakawa K."/>
            <person name="Fujimori K."/>
            <person name="Tanai H."/>
            <person name="Kimata M."/>
            <person name="Watanabe M."/>
            <person name="Hiraoka S."/>
            <person name="Chiba Y."/>
            <person name="Ishida S."/>
            <person name="Ono Y."/>
            <person name="Takiguchi S."/>
            <person name="Watanabe S."/>
            <person name="Yosida M."/>
            <person name="Hotuta T."/>
            <person name="Kusano J."/>
            <person name="Kanehori K."/>
            <person name="Takahashi-Fujii A."/>
            <person name="Hara H."/>
            <person name="Tanase T.-O."/>
            <person name="Nomura Y."/>
            <person name="Togiya S."/>
            <person name="Komai F."/>
            <person name="Hara R."/>
            <person name="Takeuchi K."/>
            <person name="Arita M."/>
            <person name="Imose N."/>
            <person name="Musashino K."/>
            <person name="Yuuki H."/>
            <person name="Oshima A."/>
            <person name="Sasaki N."/>
            <person name="Aotsuka S."/>
            <person name="Yoshikawa Y."/>
            <person name="Matsunawa H."/>
            <person name="Ichihara T."/>
            <person name="Shiohata N."/>
            <person name="Sano S."/>
            <person name="Moriya S."/>
            <person name="Momiyama H."/>
            <person name="Satoh N."/>
            <person name="Takami S."/>
            <person name="Terashima Y."/>
            <person name="Suzuki O."/>
            <person name="Nakagawa S."/>
            <person name="Senoh A."/>
            <person name="Mizoguchi H."/>
            <person name="Goto Y."/>
            <person name="Shimizu F."/>
            <person name="Wakebe H."/>
            <person name="Hishigaki H."/>
            <person name="Watanabe T."/>
            <person name="Sugiyama A."/>
            <person name="Takemoto M."/>
            <person name="Kawakami B."/>
            <person name="Yamazaki M."/>
            <person name="Watanabe K."/>
            <person name="Kumagai A."/>
            <person name="Itakura S."/>
            <person name="Fukuzumi Y."/>
            <person name="Fujimori Y."/>
            <person name="Komiyama M."/>
            <person name="Tashiro H."/>
            <person name="Tanigami A."/>
            <person name="Fujiwara T."/>
            <person name="Ono T."/>
            <person name="Yamada K."/>
            <person name="Fujii Y."/>
            <person name="Ozaki K."/>
            <person name="Hirao M."/>
            <person name="Ohmori Y."/>
            <person name="Kawabata A."/>
            <person name="Hikiji T."/>
            <person name="Kobatake N."/>
            <person name="Inagaki H."/>
            <person name="Ikema Y."/>
            <person name="Okamoto S."/>
            <person name="Okitani R."/>
            <person name="Kawakami T."/>
            <person name="Noguchi S."/>
            <person name="Itoh T."/>
            <person name="Shigeta K."/>
            <person name="Senba T."/>
            <person name="Matsumura K."/>
            <person name="Nakajima Y."/>
            <person name="Mizuno T."/>
            <person name="Morinaga M."/>
            <person name="Sasaki M."/>
            <person name="Togashi T."/>
            <person name="Oyama M."/>
            <person name="Hata H."/>
            <person name="Watanabe M."/>
            <person name="Komatsu T."/>
            <person name="Mizushima-Sugano J."/>
            <person name="Satoh T."/>
            <person name="Shirai Y."/>
            <person name="Takahashi Y."/>
            <person name="Nakagawa K."/>
            <person name="Okumura K."/>
            <person name="Nagase T."/>
            <person name="Nomura N."/>
            <person name="Kikuchi H."/>
            <person name="Masuho Y."/>
            <person name="Yamashita R."/>
            <person name="Nakai K."/>
            <person name="Yada T."/>
            <person name="Nakamura Y."/>
            <person name="Ohara O."/>
            <person name="Isogai T."/>
            <person name="Sugano S."/>
        </authorList>
    </citation>
    <scope>NUCLEOTIDE SEQUENCE [LARGE SCALE MRNA] (ISOFORM 2)</scope>
    <source>
        <tissue>Brain</tissue>
    </source>
</reference>
<reference key="4">
    <citation type="submission" date="2005-09" db="EMBL/GenBank/DDBJ databases">
        <authorList>
            <person name="Mural R.J."/>
            <person name="Istrail S."/>
            <person name="Sutton G.G."/>
            <person name="Florea L."/>
            <person name="Halpern A.L."/>
            <person name="Mobarry C.M."/>
            <person name="Lippert R."/>
            <person name="Walenz B."/>
            <person name="Shatkay H."/>
            <person name="Dew I."/>
            <person name="Miller J.R."/>
            <person name="Flanigan M.J."/>
            <person name="Edwards N.J."/>
            <person name="Bolanos R."/>
            <person name="Fasulo D."/>
            <person name="Halldorsson B.V."/>
            <person name="Hannenhalli S."/>
            <person name="Turner R."/>
            <person name="Yooseph S."/>
            <person name="Lu F."/>
            <person name="Nusskern D.R."/>
            <person name="Shue B.C."/>
            <person name="Zheng X.H."/>
            <person name="Zhong F."/>
            <person name="Delcher A.L."/>
            <person name="Huson D.H."/>
            <person name="Kravitz S.A."/>
            <person name="Mouchard L."/>
            <person name="Reinert K."/>
            <person name="Remington K.A."/>
            <person name="Clark A.G."/>
            <person name="Waterman M.S."/>
            <person name="Eichler E.E."/>
            <person name="Adams M.D."/>
            <person name="Hunkapiller M.W."/>
            <person name="Myers E.W."/>
            <person name="Venter J.C."/>
        </authorList>
    </citation>
    <scope>NUCLEOTIDE SEQUENCE [LARGE SCALE GENOMIC DNA]</scope>
</reference>
<reference key="5">
    <citation type="journal article" date="2004" name="Genome Res.">
        <title>The status, quality, and expansion of the NIH full-length cDNA project: the Mammalian Gene Collection (MGC).</title>
        <authorList>
            <consortium name="The MGC Project Team"/>
        </authorList>
    </citation>
    <scope>NUCLEOTIDE SEQUENCE [LARGE SCALE MRNA] (ISOFORM 1)</scope>
    <source>
        <tissue>Brain</tissue>
    </source>
</reference>
<protein>
    <recommendedName>
        <fullName>PILR alpha-associated neural protein</fullName>
    </recommendedName>
    <alternativeName>
        <fullName>PILR-associating neural protein</fullName>
    </alternativeName>
    <alternativeName>
        <fullName>Paired immunoglobin-like type 2 receptor-associating neural protein</fullName>
    </alternativeName>
</protein>
<comment type="function">
    <text evidence="4">Acts as a ligand for PILRA in neural tissues, where it may be involved in immune regulation.</text>
</comment>
<comment type="interaction">
    <interactant intactId="EBI-12204277">
        <id>Q8IYJ0</id>
    </interactant>
    <interactant intactId="EBI-2807956">
        <id>Q96FZ5</id>
        <label>CMTM7</label>
    </interactant>
    <organismsDiffer>false</organismsDiffer>
    <experiments>3</experiments>
</comment>
<comment type="interaction">
    <interactant intactId="EBI-12204277">
        <id>Q8IYJ0</id>
    </interactant>
    <interactant intactId="EBI-10305240">
        <id>Q9H1M4</id>
        <label>DEFB127</label>
    </interactant>
    <organismsDiffer>false</organismsDiffer>
    <experiments>3</experiments>
</comment>
<comment type="interaction">
    <interactant intactId="EBI-12204277">
        <id>Q8IYJ0</id>
    </interactant>
    <interactant intactId="EBI-1045825">
        <id>P55061</id>
        <label>TMBIM6</label>
    </interactant>
    <organismsDiffer>false</organismsDiffer>
    <experiments>3</experiments>
</comment>
<comment type="interaction">
    <interactant intactId="EBI-12204277">
        <id>Q8IYJ0</id>
    </interactant>
    <interactant intactId="EBI-947187">
        <id>Q9UHD9</id>
        <label>UBQLN2</label>
    </interactant>
    <organismsDiffer>false</organismsDiffer>
    <experiments>3</experiments>
</comment>
<comment type="subcellular location">
    <subcellularLocation>
        <location evidence="7">Membrane</location>
        <topology evidence="7">Single-pass type I membrane protein</topology>
    </subcellularLocation>
</comment>
<comment type="alternative products">
    <event type="alternative splicing"/>
    <isoform>
        <id>Q8IYJ0-1</id>
        <name>1</name>
        <sequence type="displayed"/>
    </isoform>
    <isoform>
        <id>Q8IYJ0-2</id>
        <name>2</name>
        <sequence type="described" ref="VSP_024939"/>
    </isoform>
</comment>
<comment type="tissue specificity">
    <text evidence="4">Mainly expressed in adult brain and cerebellum. Weaker expression in fetal brain and virtually no expression in spleen, heart, kidney, liver and dorsal ganglion relative to brain.</text>
</comment>
<comment type="PTM">
    <text evidence="1">O-glycosylation at Thr-140 is essential for recognition by PILRA.</text>
</comment>
<accession>Q8IYJ0</accession>
<accession>A8K0T3</accession>
<accession>B3KPF7</accession>
<accession>B3KRI6</accession>
<accession>Q6UX35</accession>
<organism>
    <name type="scientific">Homo sapiens</name>
    <name type="common">Human</name>
    <dbReference type="NCBI Taxonomy" id="9606"/>
    <lineage>
        <taxon>Eukaryota</taxon>
        <taxon>Metazoa</taxon>
        <taxon>Chordata</taxon>
        <taxon>Craniata</taxon>
        <taxon>Vertebrata</taxon>
        <taxon>Euteleostomi</taxon>
        <taxon>Mammalia</taxon>
        <taxon>Eutheria</taxon>
        <taxon>Euarchontoglires</taxon>
        <taxon>Primates</taxon>
        <taxon>Haplorrhini</taxon>
        <taxon>Catarrhini</taxon>
        <taxon>Hominidae</taxon>
        <taxon>Homo</taxon>
    </lineage>
</organism>